<dbReference type="EMBL" id="AF303741">
    <property type="protein sequence ID" value="AAB94437.1"/>
    <property type="molecule type" value="Genomic_DNA"/>
</dbReference>
<dbReference type="PIR" id="T03063">
    <property type="entry name" value="T03063"/>
</dbReference>
<dbReference type="RefSeq" id="NP_149573.1">
    <property type="nucleotide sequence ID" value="NC_003038.1"/>
</dbReference>
<dbReference type="SMR" id="O55726"/>
<dbReference type="KEGG" id="vg:1733211"/>
<dbReference type="Proteomes" id="UP000001359">
    <property type="component" value="Genome"/>
</dbReference>
<organism>
    <name type="scientific">Invertebrate iridescent virus 6</name>
    <name type="common">IIV-6</name>
    <name type="synonym">Chilo iridescent virus</name>
    <dbReference type="NCBI Taxonomy" id="176652"/>
    <lineage>
        <taxon>Viruses</taxon>
        <taxon>Varidnaviria</taxon>
        <taxon>Bamfordvirae</taxon>
        <taxon>Nucleocytoviricota</taxon>
        <taxon>Megaviricetes</taxon>
        <taxon>Pimascovirales</taxon>
        <taxon>Iridoviridae</taxon>
        <taxon>Betairidovirinae</taxon>
        <taxon>Iridovirus</taxon>
    </lineage>
</organism>
<evidence type="ECO:0000255" key="1"/>
<accession>O55726</accession>
<gene>
    <name type="ORF">IIV6-110R</name>
</gene>
<reference key="1">
    <citation type="journal article" date="2001" name="Virology">
        <title>Analysis of the first complete DNA sequence of an invertebrate iridovirus: coding strategy of the genome of Chilo iridescent virus.</title>
        <authorList>
            <person name="Jakob N.J."/>
            <person name="Mueller K."/>
            <person name="Bahr U."/>
            <person name="Darai G."/>
        </authorList>
    </citation>
    <scope>NUCLEOTIDE SEQUENCE [LARGE SCALE GENOMIC DNA]</scope>
</reference>
<reference key="2">
    <citation type="journal article" date="2007" name="Virol. J.">
        <title>Comparative genomic analysis of the family Iridoviridae: re-annotating and defining the core set of iridovirus genes.</title>
        <authorList>
            <person name="Eaton H.E."/>
            <person name="Metcalf J."/>
            <person name="Penny E."/>
            <person name="Tcherepanov V."/>
            <person name="Upton C."/>
            <person name="Brunetti C.R."/>
        </authorList>
    </citation>
    <scope>GENOME REANNOTATION</scope>
</reference>
<sequence length="68" mass="7730">MKGLLCFIYILSAILIGCVFLNKDVEAFTPYRNEPSHYQTVYESNSSYPKSSLDITGWSYQPSVDDVN</sequence>
<protein>
    <recommendedName>
        <fullName>Uncharacterized protein 110R</fullName>
    </recommendedName>
</protein>
<organismHost>
    <name type="scientific">Acheta domesticus</name>
    <name type="common">House cricket</name>
    <dbReference type="NCBI Taxonomy" id="6997"/>
</organismHost>
<organismHost>
    <name type="scientific">Chilo suppressalis</name>
    <name type="common">Asiatic rice borer moth</name>
    <dbReference type="NCBI Taxonomy" id="168631"/>
</organismHost>
<organismHost>
    <name type="scientific">Gryllus bimaculatus</name>
    <name type="common">Two-spotted cricket</name>
    <dbReference type="NCBI Taxonomy" id="6999"/>
</organismHost>
<organismHost>
    <name type="scientific">Gryllus campestris</name>
    <dbReference type="NCBI Taxonomy" id="58607"/>
</organismHost>
<organismHost>
    <name type="scientific">Spodoptera frugiperda</name>
    <name type="common">Fall armyworm</name>
    <dbReference type="NCBI Taxonomy" id="7108"/>
</organismHost>
<name>110R_IIV6</name>
<proteinExistence type="inferred from homology"/>
<feature type="signal peptide" evidence="1">
    <location>
        <begin position="1"/>
        <end position="27"/>
    </location>
</feature>
<feature type="chain" id="PRO_0000377991" description="Uncharacterized protein 110R">
    <location>
        <begin position="28"/>
        <end position="68"/>
    </location>
</feature>
<keyword id="KW-1185">Reference proteome</keyword>
<keyword id="KW-0732">Signal</keyword>